<proteinExistence type="evidence at protein level"/>
<sequence>MKTLLTILTVGSLAAHTTVDTSGLLQHVKFQSSNFENILTWDGGPASTSDTVYSVEYKKYGERKWLAKAGCQRITQKFCNLTMETRNHTEFYYAKVTAVSAGGPPVTKMTDRFSSLQHTTIKPPDVTCIPKVRSIQMLVHPTLTPVLSEDGHQLTLEEIFHDLFYRLELHVNHTYQMHLEGKQREYEFLGLTPDTEFLGSITILTPILSKESAPYVCRVKTLPDRTWAYSFSGAVLFSMGFLVGLLCYLGYKYITKPPVPPNSLNVQRVLTFQPLRFIQEHVLIPVLDLSGPSSLPQPIQYSQVVVSGPREPPGAVWRQSLSDLTYVGQSDVSILQPTNVPAQQTLSPPSYAPKAVPEVQPPSYAPQVASDAKALFYSPQQGMKTRPATYDPQDILDSCPASYAVCVEDSGKDSTPGILSTPKYLKTKGQLQEDTLVRSCLPGDLSLQKVTSLGEGETQRPKSLPSPLGFCTDRGPDLHTLRSEEPETPRYLKGALSLLSSVQIEGHPVSLPLHVHSVSCSPSDEGPSPWGLLDSLVCPKDEGPAVETEAMCPSAAASELEQSTELDSLFKGLALTVQWES</sequence>
<reference key="1">
    <citation type="journal article" date="2003" name="Genes Immun.">
        <title>Genomic structure and inducible expression of the IL-22 receptor alpha chain in mice.</title>
        <authorList>
            <person name="Tachiiri A."/>
            <person name="Imamura R."/>
            <person name="Wang Y."/>
            <person name="Fukui M."/>
            <person name="Umemura M."/>
            <person name="Suda T."/>
        </authorList>
    </citation>
    <scope>NUCLEOTIDE SEQUENCE [MRNA]</scope>
    <scope>FUNCTION</scope>
    <scope>TISSUE SPECIFICITY</scope>
    <scope>INDUCTION</scope>
    <source>
        <strain>BALB/cJ</strain>
        <tissue>Liver</tissue>
    </source>
</reference>
<reference key="2">
    <citation type="journal article" date="2005" name="Science">
        <title>The transcriptional landscape of the mammalian genome.</title>
        <authorList>
            <person name="Carninci P."/>
            <person name="Kasukawa T."/>
            <person name="Katayama S."/>
            <person name="Gough J."/>
            <person name="Frith M.C."/>
            <person name="Maeda N."/>
            <person name="Oyama R."/>
            <person name="Ravasi T."/>
            <person name="Lenhard B."/>
            <person name="Wells C."/>
            <person name="Kodzius R."/>
            <person name="Shimokawa K."/>
            <person name="Bajic V.B."/>
            <person name="Brenner S.E."/>
            <person name="Batalov S."/>
            <person name="Forrest A.R."/>
            <person name="Zavolan M."/>
            <person name="Davis M.J."/>
            <person name="Wilming L.G."/>
            <person name="Aidinis V."/>
            <person name="Allen J.E."/>
            <person name="Ambesi-Impiombato A."/>
            <person name="Apweiler R."/>
            <person name="Aturaliya R.N."/>
            <person name="Bailey T.L."/>
            <person name="Bansal M."/>
            <person name="Baxter L."/>
            <person name="Beisel K.W."/>
            <person name="Bersano T."/>
            <person name="Bono H."/>
            <person name="Chalk A.M."/>
            <person name="Chiu K.P."/>
            <person name="Choudhary V."/>
            <person name="Christoffels A."/>
            <person name="Clutterbuck D.R."/>
            <person name="Crowe M.L."/>
            <person name="Dalla E."/>
            <person name="Dalrymple B.P."/>
            <person name="de Bono B."/>
            <person name="Della Gatta G."/>
            <person name="di Bernardo D."/>
            <person name="Down T."/>
            <person name="Engstrom P."/>
            <person name="Fagiolini M."/>
            <person name="Faulkner G."/>
            <person name="Fletcher C.F."/>
            <person name="Fukushima T."/>
            <person name="Furuno M."/>
            <person name="Futaki S."/>
            <person name="Gariboldi M."/>
            <person name="Georgii-Hemming P."/>
            <person name="Gingeras T.R."/>
            <person name="Gojobori T."/>
            <person name="Green R.E."/>
            <person name="Gustincich S."/>
            <person name="Harbers M."/>
            <person name="Hayashi Y."/>
            <person name="Hensch T.K."/>
            <person name="Hirokawa N."/>
            <person name="Hill D."/>
            <person name="Huminiecki L."/>
            <person name="Iacono M."/>
            <person name="Ikeo K."/>
            <person name="Iwama A."/>
            <person name="Ishikawa T."/>
            <person name="Jakt M."/>
            <person name="Kanapin A."/>
            <person name="Katoh M."/>
            <person name="Kawasawa Y."/>
            <person name="Kelso J."/>
            <person name="Kitamura H."/>
            <person name="Kitano H."/>
            <person name="Kollias G."/>
            <person name="Krishnan S.P."/>
            <person name="Kruger A."/>
            <person name="Kummerfeld S.K."/>
            <person name="Kurochkin I.V."/>
            <person name="Lareau L.F."/>
            <person name="Lazarevic D."/>
            <person name="Lipovich L."/>
            <person name="Liu J."/>
            <person name="Liuni S."/>
            <person name="McWilliam S."/>
            <person name="Madan Babu M."/>
            <person name="Madera M."/>
            <person name="Marchionni L."/>
            <person name="Matsuda H."/>
            <person name="Matsuzawa S."/>
            <person name="Miki H."/>
            <person name="Mignone F."/>
            <person name="Miyake S."/>
            <person name="Morris K."/>
            <person name="Mottagui-Tabar S."/>
            <person name="Mulder N."/>
            <person name="Nakano N."/>
            <person name="Nakauchi H."/>
            <person name="Ng P."/>
            <person name="Nilsson R."/>
            <person name="Nishiguchi S."/>
            <person name="Nishikawa S."/>
            <person name="Nori F."/>
            <person name="Ohara O."/>
            <person name="Okazaki Y."/>
            <person name="Orlando V."/>
            <person name="Pang K.C."/>
            <person name="Pavan W.J."/>
            <person name="Pavesi G."/>
            <person name="Pesole G."/>
            <person name="Petrovsky N."/>
            <person name="Piazza S."/>
            <person name="Reed J."/>
            <person name="Reid J.F."/>
            <person name="Ring B.Z."/>
            <person name="Ringwald M."/>
            <person name="Rost B."/>
            <person name="Ruan Y."/>
            <person name="Salzberg S.L."/>
            <person name="Sandelin A."/>
            <person name="Schneider C."/>
            <person name="Schoenbach C."/>
            <person name="Sekiguchi K."/>
            <person name="Semple C.A."/>
            <person name="Seno S."/>
            <person name="Sessa L."/>
            <person name="Sheng Y."/>
            <person name="Shibata Y."/>
            <person name="Shimada H."/>
            <person name="Shimada K."/>
            <person name="Silva D."/>
            <person name="Sinclair B."/>
            <person name="Sperling S."/>
            <person name="Stupka E."/>
            <person name="Sugiura K."/>
            <person name="Sultana R."/>
            <person name="Takenaka Y."/>
            <person name="Taki K."/>
            <person name="Tammoja K."/>
            <person name="Tan S.L."/>
            <person name="Tang S."/>
            <person name="Taylor M.S."/>
            <person name="Tegner J."/>
            <person name="Teichmann S.A."/>
            <person name="Ueda H.R."/>
            <person name="van Nimwegen E."/>
            <person name="Verardo R."/>
            <person name="Wei C.L."/>
            <person name="Yagi K."/>
            <person name="Yamanishi H."/>
            <person name="Zabarovsky E."/>
            <person name="Zhu S."/>
            <person name="Zimmer A."/>
            <person name="Hide W."/>
            <person name="Bult C."/>
            <person name="Grimmond S.M."/>
            <person name="Teasdale R.D."/>
            <person name="Liu E.T."/>
            <person name="Brusic V."/>
            <person name="Quackenbush J."/>
            <person name="Wahlestedt C."/>
            <person name="Mattick J.S."/>
            <person name="Hume D.A."/>
            <person name="Kai C."/>
            <person name="Sasaki D."/>
            <person name="Tomaru Y."/>
            <person name="Fukuda S."/>
            <person name="Kanamori-Katayama M."/>
            <person name="Suzuki M."/>
            <person name="Aoki J."/>
            <person name="Arakawa T."/>
            <person name="Iida J."/>
            <person name="Imamura K."/>
            <person name="Itoh M."/>
            <person name="Kato T."/>
            <person name="Kawaji H."/>
            <person name="Kawagashira N."/>
            <person name="Kawashima T."/>
            <person name="Kojima M."/>
            <person name="Kondo S."/>
            <person name="Konno H."/>
            <person name="Nakano K."/>
            <person name="Ninomiya N."/>
            <person name="Nishio T."/>
            <person name="Okada M."/>
            <person name="Plessy C."/>
            <person name="Shibata K."/>
            <person name="Shiraki T."/>
            <person name="Suzuki S."/>
            <person name="Tagami M."/>
            <person name="Waki K."/>
            <person name="Watahiki A."/>
            <person name="Okamura-Oho Y."/>
            <person name="Suzuki H."/>
            <person name="Kawai J."/>
            <person name="Hayashizaki Y."/>
        </authorList>
    </citation>
    <scope>NUCLEOTIDE SEQUENCE [LARGE SCALE MRNA]</scope>
</reference>
<reference key="3">
    <citation type="journal article" date="2009" name="PLoS Biol.">
        <title>Lineage-specific biology revealed by a finished genome assembly of the mouse.</title>
        <authorList>
            <person name="Church D.M."/>
            <person name="Goodstadt L."/>
            <person name="Hillier L.W."/>
            <person name="Zody M.C."/>
            <person name="Goldstein S."/>
            <person name="She X."/>
            <person name="Bult C.J."/>
            <person name="Agarwala R."/>
            <person name="Cherry J.L."/>
            <person name="DiCuccio M."/>
            <person name="Hlavina W."/>
            <person name="Kapustin Y."/>
            <person name="Meric P."/>
            <person name="Maglott D."/>
            <person name="Birtle Z."/>
            <person name="Marques A.C."/>
            <person name="Graves T."/>
            <person name="Zhou S."/>
            <person name="Teague B."/>
            <person name="Potamousis K."/>
            <person name="Churas C."/>
            <person name="Place M."/>
            <person name="Herschleb J."/>
            <person name="Runnheim R."/>
            <person name="Forrest D."/>
            <person name="Amos-Landgraf J."/>
            <person name="Schwartz D.C."/>
            <person name="Cheng Z."/>
            <person name="Lindblad-Toh K."/>
            <person name="Eichler E.E."/>
            <person name="Ponting C.P."/>
        </authorList>
    </citation>
    <scope>NUCLEOTIDE SEQUENCE [LARGE SCALE GENOMIC DNA]</scope>
    <source>
        <strain>C57BL/6J</strain>
    </source>
</reference>
<reference key="4">
    <citation type="journal article" date="2004" name="Genome Res.">
        <title>The status, quality, and expansion of the NIH full-length cDNA project: the Mammalian Gene Collection (MGC).</title>
        <authorList>
            <consortium name="The MGC Project Team"/>
        </authorList>
    </citation>
    <scope>NUCLEOTIDE SEQUENCE [LARGE SCALE MRNA]</scope>
    <source>
        <tissue>Brain</tissue>
    </source>
</reference>
<reference key="5">
    <citation type="journal article" date="2014" name="J. Biol. Chem.">
        <title>Glycogen synthase kinase-3beta stabilizes the interleukin (IL)-22 receptor from proteasomal degradation in murine lung epithelia.</title>
        <authorList>
            <person name="Weathington N.M."/>
            <person name="Snavely C.A."/>
            <person name="Chen B.B."/>
            <person name="Zhao J."/>
            <person name="Zhao Y."/>
            <person name="Mallampalli R.K."/>
        </authorList>
    </citation>
    <scope>UBIQUITINATION AT LYS-449</scope>
    <scope>PHOSPHORYLATION BY MAPK</scope>
    <scope>PHOSPHORYLATION AT SER-410 AND SER-414 BY GSK3-BETA</scope>
    <scope>MUTAGENESIS OF SER-410; SER-414; LYS-426; LYS-428; LYS-449 AND LYS-540</scope>
</reference>
<protein>
    <recommendedName>
        <fullName>Interleukin-22 receptor subunit alpha-1</fullName>
        <shortName>IL-22 receptor subunit alpha-1</shortName>
        <shortName>IL-22R-alpha-1</shortName>
        <shortName>IL-22RA1</shortName>
    </recommendedName>
</protein>
<gene>
    <name type="primary">Il22ra1</name>
</gene>
<name>I22R1_MOUSE</name>
<comment type="function">
    <text evidence="4">Component of the receptor for IL20, IL22 and IL24. Component of IL22 receptor formed by IL22RA1 and IL10RB enabling IL22 signaling via JAK/STAT pathways. IL22 also induces activation of MAPK1/MAPK3 and Akt kinases pathways. Component of one of the receptor for IL20 and IL24 formed by IL22RA1 and IL20RB also signaling through STATs activation. Mediates IL24 antiangiogenic activity as well as IL24 inhibitory effect on endothelial cell tube formation and differentiation.</text>
</comment>
<comment type="subunit">
    <text evidence="1">Heterodimer with IL10RB and with IL20RB.</text>
</comment>
<comment type="subcellular location">
    <subcellularLocation>
        <location evidence="1">Cell membrane</location>
        <topology evidence="2">Single-pass type I membrane protein</topology>
    </subcellularLocation>
</comment>
<comment type="tissue specificity">
    <text evidence="4">Expressed in kidney, liver and lung.</text>
</comment>
<comment type="induction">
    <text evidence="4">By LPS stimulation in the liver.</text>
</comment>
<comment type="PTM">
    <text evidence="5">Phosphorylated by GSK3-BETA and MAPK; phosphorylation by GSK3-BETA stabilizes IL22RA1 by preventing its proteasomal degradation.</text>
</comment>
<comment type="similarity">
    <text evidence="6">Belongs to the type II cytokine receptor family.</text>
</comment>
<evidence type="ECO:0000250" key="1">
    <source>
        <dbReference type="UniProtKB" id="Q8N6P7"/>
    </source>
</evidence>
<evidence type="ECO:0000255" key="2"/>
<evidence type="ECO:0000256" key="3">
    <source>
        <dbReference type="SAM" id="MobiDB-lite"/>
    </source>
</evidence>
<evidence type="ECO:0000269" key="4">
    <source>
    </source>
</evidence>
<evidence type="ECO:0000269" key="5">
    <source>
    </source>
</evidence>
<evidence type="ECO:0000305" key="6"/>
<evidence type="ECO:0007829" key="7">
    <source>
        <dbReference type="PDB" id="6WEO"/>
    </source>
</evidence>
<keyword id="KW-0002">3D-structure</keyword>
<keyword id="KW-1003">Cell membrane</keyword>
<keyword id="KW-1015">Disulfide bond</keyword>
<keyword id="KW-0325">Glycoprotein</keyword>
<keyword id="KW-1017">Isopeptide bond</keyword>
<keyword id="KW-0472">Membrane</keyword>
<keyword id="KW-0597">Phosphoprotein</keyword>
<keyword id="KW-0675">Receptor</keyword>
<keyword id="KW-1185">Reference proteome</keyword>
<keyword id="KW-0677">Repeat</keyword>
<keyword id="KW-0732">Signal</keyword>
<keyword id="KW-0812">Transmembrane</keyword>
<keyword id="KW-1133">Transmembrane helix</keyword>
<keyword id="KW-0832">Ubl conjugation</keyword>
<accession>Q80XZ4</accession>
<accession>B2RU51</accession>
<accession>Q3URP9</accession>
<organism>
    <name type="scientific">Mus musculus</name>
    <name type="common">Mouse</name>
    <dbReference type="NCBI Taxonomy" id="10090"/>
    <lineage>
        <taxon>Eukaryota</taxon>
        <taxon>Metazoa</taxon>
        <taxon>Chordata</taxon>
        <taxon>Craniata</taxon>
        <taxon>Vertebrata</taxon>
        <taxon>Euteleostomi</taxon>
        <taxon>Mammalia</taxon>
        <taxon>Eutheria</taxon>
        <taxon>Euarchontoglires</taxon>
        <taxon>Glires</taxon>
        <taxon>Rodentia</taxon>
        <taxon>Myomorpha</taxon>
        <taxon>Muroidea</taxon>
        <taxon>Muridae</taxon>
        <taxon>Murinae</taxon>
        <taxon>Mus</taxon>
        <taxon>Mus</taxon>
    </lineage>
</organism>
<feature type="signal peptide" evidence="2">
    <location>
        <begin position="1"/>
        <end position="15"/>
    </location>
</feature>
<feature type="chain" id="PRO_0000324321" description="Interleukin-22 receptor subunit alpha-1">
    <location>
        <begin position="16"/>
        <end position="581"/>
    </location>
</feature>
<feature type="topological domain" description="Extracellular" evidence="2">
    <location>
        <begin position="16"/>
        <end position="230"/>
    </location>
</feature>
<feature type="transmembrane region" description="Helical" evidence="2">
    <location>
        <begin position="231"/>
        <end position="251"/>
    </location>
</feature>
<feature type="topological domain" description="Cytoplasmic" evidence="2">
    <location>
        <begin position="252"/>
        <end position="581"/>
    </location>
</feature>
<feature type="domain" description="Fibronectin type-III 1">
    <location>
        <begin position="18"/>
        <end position="115"/>
    </location>
</feature>
<feature type="domain" description="Fibronectin type-III 2">
    <location>
        <begin position="141"/>
        <end position="221"/>
    </location>
</feature>
<feature type="region of interest" description="Disordered" evidence="3">
    <location>
        <begin position="343"/>
        <end position="364"/>
    </location>
</feature>
<feature type="modified residue" description="Phosphoserine; by GSK3-beta" evidence="5">
    <location>
        <position position="410"/>
    </location>
</feature>
<feature type="modified residue" description="Phosphoserine; by GSK3-beta" evidence="5">
    <location>
        <position position="414"/>
    </location>
</feature>
<feature type="glycosylation site" description="N-linked (GlcNAc...) asparagine" evidence="2">
    <location>
        <position position="80"/>
    </location>
</feature>
<feature type="glycosylation site" description="N-linked (GlcNAc...) asparagine" evidence="2">
    <location>
        <position position="172"/>
    </location>
</feature>
<feature type="disulfide bond" evidence="1">
    <location>
        <begin position="71"/>
        <end position="79"/>
    </location>
</feature>
<feature type="disulfide bond" evidence="1">
    <location>
        <begin position="128"/>
        <end position="217"/>
    </location>
</feature>
<feature type="cross-link" description="Glycyl lysine isopeptide (Lys-Gly) (interchain with G-Cter in ubiquitin)" evidence="5">
    <location>
        <position position="449"/>
    </location>
</feature>
<feature type="mutagenesis site" description="Abolishes phosphorylation by GSK3B; reduces stability of the protein." evidence="5">
    <original>S</original>
    <variation>A</variation>
    <location>
        <position position="410"/>
    </location>
</feature>
<feature type="mutagenesis site" description="Abolishes phosphorylation by GSK3B; reduces stability of the protein." evidence="5">
    <original>S</original>
    <variation>A</variation>
    <location>
        <position position="414"/>
    </location>
</feature>
<feature type="mutagenesis site" description="No effect on protein degradation." evidence="5">
    <original>K</original>
    <variation>R</variation>
    <location>
        <position position="426"/>
    </location>
</feature>
<feature type="mutagenesis site" description="No effect on protein degradation." evidence="5">
    <original>K</original>
    <variation>R</variation>
    <location>
        <position position="428"/>
    </location>
</feature>
<feature type="mutagenesis site" description="Degradation-resistant mutant." evidence="5">
    <original>K</original>
    <variation>R</variation>
    <location>
        <position position="449"/>
    </location>
</feature>
<feature type="mutagenesis site" description="No effect on protein degradation." evidence="5">
    <original>K</original>
    <variation>R</variation>
    <location>
        <position position="540"/>
    </location>
</feature>
<feature type="sequence conflict" description="In Ref. 2; BAE24639." evidence="6" ref="2">
    <original>L</original>
    <variation>M</variation>
    <location>
        <position position="335"/>
    </location>
</feature>
<feature type="sequence conflict" description="In Ref. 2; BAE24639." evidence="6" ref="2">
    <original>S</original>
    <variation>Y</variation>
    <location>
        <position position="535"/>
    </location>
</feature>
<feature type="strand" evidence="7">
    <location>
        <begin position="26"/>
        <end position="33"/>
    </location>
</feature>
<feature type="strand" evidence="7">
    <location>
        <begin position="36"/>
        <end position="42"/>
    </location>
</feature>
<feature type="strand" evidence="7">
    <location>
        <begin position="52"/>
        <end position="59"/>
    </location>
</feature>
<feature type="strand" evidence="7">
    <location>
        <begin position="72"/>
        <end position="80"/>
    </location>
</feature>
<feature type="helix" evidence="7">
    <location>
        <begin position="83"/>
        <end position="85"/>
    </location>
</feature>
<feature type="strand" evidence="7">
    <location>
        <begin position="92"/>
        <end position="100"/>
    </location>
</feature>
<feature type="strand" evidence="7">
    <location>
        <begin position="103"/>
        <end position="109"/>
    </location>
</feature>
<feature type="helix" evidence="7">
    <location>
        <begin position="115"/>
        <end position="118"/>
    </location>
</feature>
<feature type="strand" evidence="7">
    <location>
        <begin position="125"/>
        <end position="130"/>
    </location>
</feature>
<feature type="strand" evidence="7">
    <location>
        <begin position="132"/>
        <end position="140"/>
    </location>
</feature>
<feature type="strand" evidence="7">
    <location>
        <begin position="143"/>
        <end position="147"/>
    </location>
</feature>
<feature type="strand" evidence="7">
    <location>
        <begin position="153"/>
        <end position="155"/>
    </location>
</feature>
<feature type="helix" evidence="7">
    <location>
        <begin position="156"/>
        <end position="159"/>
    </location>
</feature>
<feature type="strand" evidence="7">
    <location>
        <begin position="164"/>
        <end position="172"/>
    </location>
</feature>
<feature type="strand" evidence="7">
    <location>
        <begin position="175"/>
        <end position="190"/>
    </location>
</feature>
<feature type="strand" evidence="7">
    <location>
        <begin position="196"/>
        <end position="205"/>
    </location>
</feature>
<feature type="turn" evidence="7">
    <location>
        <begin position="206"/>
        <end position="209"/>
    </location>
</feature>
<feature type="strand" evidence="7">
    <location>
        <begin position="215"/>
        <end position="220"/>
    </location>
</feature>
<dbReference type="EMBL" id="AY103454">
    <property type="protein sequence ID" value="AAM52222.1"/>
    <property type="molecule type" value="mRNA"/>
</dbReference>
<dbReference type="EMBL" id="AK141289">
    <property type="protein sequence ID" value="BAE24639.1"/>
    <property type="molecule type" value="mRNA"/>
</dbReference>
<dbReference type="EMBL" id="AL662911">
    <property type="status" value="NOT_ANNOTATED_CDS"/>
    <property type="molecule type" value="Genomic_DNA"/>
</dbReference>
<dbReference type="EMBL" id="BC140972">
    <property type="protein sequence ID" value="AAI40973.1"/>
    <property type="molecule type" value="mRNA"/>
</dbReference>
<dbReference type="EMBL" id="BC140973">
    <property type="protein sequence ID" value="AAI40974.1"/>
    <property type="molecule type" value="mRNA"/>
</dbReference>
<dbReference type="CCDS" id="CCDS18789.1"/>
<dbReference type="RefSeq" id="NP_839988.1">
    <property type="nucleotide sequence ID" value="NM_178257.2"/>
</dbReference>
<dbReference type="PDB" id="6WEO">
    <property type="method" value="X-ray"/>
    <property type="resolution" value="2.60 A"/>
    <property type="chains" value="1/4/7/A/B/F/I/M/P/S/V/Y=24-224"/>
</dbReference>
<dbReference type="PDBsum" id="6WEO"/>
<dbReference type="SMR" id="Q80XZ4"/>
<dbReference type="FunCoup" id="Q80XZ4">
    <property type="interactions" value="1085"/>
</dbReference>
<dbReference type="STRING" id="10090.ENSMUSP00000099605"/>
<dbReference type="GlyCosmos" id="Q80XZ4">
    <property type="glycosylation" value="2 sites, No reported glycans"/>
</dbReference>
<dbReference type="GlyGen" id="Q80XZ4">
    <property type="glycosylation" value="2 sites"/>
</dbReference>
<dbReference type="iPTMnet" id="Q80XZ4"/>
<dbReference type="PhosphoSitePlus" id="Q80XZ4"/>
<dbReference type="jPOST" id="Q80XZ4"/>
<dbReference type="PaxDb" id="10090-ENSMUSP00000099605"/>
<dbReference type="ProteomicsDB" id="266938"/>
<dbReference type="Antibodypedia" id="15695">
    <property type="antibodies" value="461 antibodies from 36 providers"/>
</dbReference>
<dbReference type="DNASU" id="230828"/>
<dbReference type="Ensembl" id="ENSMUST00000102546.4">
    <property type="protein sequence ID" value="ENSMUSP00000099605.4"/>
    <property type="gene ID" value="ENSMUSG00000037157.9"/>
</dbReference>
<dbReference type="GeneID" id="230828"/>
<dbReference type="KEGG" id="mmu:230828"/>
<dbReference type="UCSC" id="uc008vgx.2">
    <property type="organism name" value="mouse"/>
</dbReference>
<dbReference type="AGR" id="MGI:2663588"/>
<dbReference type="CTD" id="58985"/>
<dbReference type="MGI" id="MGI:2663588">
    <property type="gene designation" value="Il22ra1"/>
</dbReference>
<dbReference type="VEuPathDB" id="HostDB:ENSMUSG00000037157"/>
<dbReference type="eggNOG" id="ENOG502S4IS">
    <property type="taxonomic scope" value="Eukaryota"/>
</dbReference>
<dbReference type="GeneTree" id="ENSGT00940000161366"/>
<dbReference type="HOGENOM" id="CLU_033634_0_0_1"/>
<dbReference type="InParanoid" id="Q80XZ4"/>
<dbReference type="OMA" id="WLAKEGC"/>
<dbReference type="OrthoDB" id="9908819at2759"/>
<dbReference type="PhylomeDB" id="Q80XZ4"/>
<dbReference type="TreeFam" id="TF334107"/>
<dbReference type="Reactome" id="R-MMU-8854691">
    <property type="pathway name" value="Interleukin-20 family signaling"/>
</dbReference>
<dbReference type="BioGRID-ORCS" id="230828">
    <property type="hits" value="2 hits in 76 CRISPR screens"/>
</dbReference>
<dbReference type="PRO" id="PR:Q80XZ4"/>
<dbReference type="Proteomes" id="UP000000589">
    <property type="component" value="Chromosome 4"/>
</dbReference>
<dbReference type="RNAct" id="Q80XZ4">
    <property type="molecule type" value="protein"/>
</dbReference>
<dbReference type="Bgee" id="ENSMUSG00000037157">
    <property type="expression patterns" value="Expressed in jejunum and 25 other cell types or tissues"/>
</dbReference>
<dbReference type="GO" id="GO:0005886">
    <property type="term" value="C:plasma membrane"/>
    <property type="evidence" value="ECO:0000250"/>
    <property type="project" value="UniProt"/>
</dbReference>
<dbReference type="GO" id="GO:0042015">
    <property type="term" value="F:interleukin-20 binding"/>
    <property type="evidence" value="ECO:0000353"/>
    <property type="project" value="MGI"/>
</dbReference>
<dbReference type="GO" id="GO:0042018">
    <property type="term" value="F:interleukin-22 receptor activity"/>
    <property type="evidence" value="ECO:0000314"/>
    <property type="project" value="UniProt"/>
</dbReference>
<dbReference type="GO" id="GO:0050829">
    <property type="term" value="P:defense response to Gram-negative bacterium"/>
    <property type="evidence" value="ECO:0000315"/>
    <property type="project" value="MGI"/>
</dbReference>
<dbReference type="GO" id="GO:0050728">
    <property type="term" value="P:negative regulation of inflammatory response"/>
    <property type="evidence" value="ECO:0000314"/>
    <property type="project" value="UniProt"/>
</dbReference>
<dbReference type="FunFam" id="2.60.40.10:FF:000348">
    <property type="entry name" value="Interleukin 20 receptor subunit alpha"/>
    <property type="match status" value="1"/>
</dbReference>
<dbReference type="FunFam" id="2.60.40.10:FF:001465">
    <property type="entry name" value="Interleukin-22 receptor subunit alpha-1"/>
    <property type="match status" value="1"/>
</dbReference>
<dbReference type="Gene3D" id="2.60.40.10">
    <property type="entry name" value="Immunoglobulins"/>
    <property type="match status" value="2"/>
</dbReference>
<dbReference type="InterPro" id="IPR003961">
    <property type="entry name" value="FN3_dom"/>
</dbReference>
<dbReference type="InterPro" id="IPR036116">
    <property type="entry name" value="FN3_sf"/>
</dbReference>
<dbReference type="InterPro" id="IPR013783">
    <property type="entry name" value="Ig-like_fold"/>
</dbReference>
<dbReference type="InterPro" id="IPR050650">
    <property type="entry name" value="Type-II_Cytokine-TF_Rcpt"/>
</dbReference>
<dbReference type="PANTHER" id="PTHR20859">
    <property type="entry name" value="INTERFERON/INTERLEUKIN RECEPTOR"/>
    <property type="match status" value="1"/>
</dbReference>
<dbReference type="PANTHER" id="PTHR20859:SF53">
    <property type="entry name" value="INTERLEUKIN-22 RECEPTOR SUBUNIT ALPHA-1"/>
    <property type="match status" value="1"/>
</dbReference>
<dbReference type="Pfam" id="PF01108">
    <property type="entry name" value="Tissue_fac"/>
    <property type="match status" value="1"/>
</dbReference>
<dbReference type="SUPFAM" id="SSF49265">
    <property type="entry name" value="Fibronectin type III"/>
    <property type="match status" value="2"/>
</dbReference>